<feature type="chain" id="PRO_0000053734" description="Steroidogenic factor 1">
    <location>
        <begin position="1"/>
        <end position="462"/>
    </location>
</feature>
<feature type="domain" description="NR LBD" evidence="5">
    <location>
        <begin position="223"/>
        <end position="460"/>
    </location>
</feature>
<feature type="DNA-binding region" description="Nuclear receptor" evidence="4">
    <location>
        <begin position="10"/>
        <end position="85"/>
    </location>
</feature>
<feature type="zinc finger region" description="NR C4-type" evidence="4">
    <location>
        <begin position="13"/>
        <end position="33"/>
    </location>
</feature>
<feature type="zinc finger region" description="NR C4-type" evidence="4">
    <location>
        <begin position="49"/>
        <end position="73"/>
    </location>
</feature>
<feature type="region of interest" description="Disordered" evidence="6">
    <location>
        <begin position="117"/>
        <end position="149"/>
    </location>
</feature>
<feature type="compositionally biased region" description="Pro residues" evidence="6">
    <location>
        <begin position="126"/>
        <end position="139"/>
    </location>
</feature>
<feature type="binding site" evidence="2">
    <location>
        <position position="342"/>
    </location>
    <ligand>
        <name>a 1,2-diacyl-sn-glycero-3-phosphocholine</name>
        <dbReference type="ChEBI" id="CHEBI:57643"/>
    </ligand>
</feature>
<feature type="binding site" evidence="2">
    <location>
        <position position="437"/>
    </location>
    <ligand>
        <name>a 1,2-diacyl-sn-glycero-3-phosphocholine</name>
        <dbReference type="ChEBI" id="CHEBI:57643"/>
    </ligand>
</feature>
<feature type="binding site" evidence="2">
    <location>
        <position position="441"/>
    </location>
    <ligand>
        <name>a 1,2-diacyl-sn-glycero-3-phosphocholine</name>
        <dbReference type="ChEBI" id="CHEBI:57643"/>
    </ligand>
</feature>
<feature type="modified residue" description="N6-acetyllysine" evidence="3">
    <location>
        <position position="34"/>
    </location>
</feature>
<feature type="modified residue" description="N6-acetyllysine" evidence="3">
    <location>
        <position position="38"/>
    </location>
</feature>
<feature type="modified residue" description="N6-acetyllysine" evidence="3">
    <location>
        <position position="72"/>
    </location>
</feature>
<feature type="modified residue" description="Phosphoserine; by CDK7" evidence="3">
    <location>
        <position position="203"/>
    </location>
</feature>
<feature type="cross-link" description="Glycyl lysine isopeptide (Lys-Gly) (interchain with G-Cter in SUMO)" evidence="1">
    <location>
        <position position="119"/>
    </location>
</feature>
<feature type="cross-link" description="Glycyl lysine isopeptide (Lys-Gly) (interchain with G-Cter in SUMO)" evidence="1">
    <location>
        <position position="194"/>
    </location>
</feature>
<feature type="sequence conflict" description="In Ref. 2." evidence="7" ref="2">
    <original>K</original>
    <variation>R</variation>
    <location>
        <position position="150"/>
    </location>
</feature>
<organism>
    <name type="scientific">Rattus norvegicus</name>
    <name type="common">Rat</name>
    <dbReference type="NCBI Taxonomy" id="10116"/>
    <lineage>
        <taxon>Eukaryota</taxon>
        <taxon>Metazoa</taxon>
        <taxon>Chordata</taxon>
        <taxon>Craniata</taxon>
        <taxon>Vertebrata</taxon>
        <taxon>Euteleostomi</taxon>
        <taxon>Mammalia</taxon>
        <taxon>Eutheria</taxon>
        <taxon>Euarchontoglires</taxon>
        <taxon>Glires</taxon>
        <taxon>Rodentia</taxon>
        <taxon>Myomorpha</taxon>
        <taxon>Muroidea</taxon>
        <taxon>Muridae</taxon>
        <taxon>Murinae</taxon>
        <taxon>Rattus</taxon>
    </lineage>
</organism>
<gene>
    <name type="primary">Nr5a1</name>
    <name type="synonym">Ftzf1</name>
</gene>
<evidence type="ECO:0000250" key="1"/>
<evidence type="ECO:0000250" key="2">
    <source>
        <dbReference type="UniProtKB" id="P33242"/>
    </source>
</evidence>
<evidence type="ECO:0000250" key="3">
    <source>
        <dbReference type="UniProtKB" id="Q13285"/>
    </source>
</evidence>
<evidence type="ECO:0000255" key="4">
    <source>
        <dbReference type="PROSITE-ProRule" id="PRU00407"/>
    </source>
</evidence>
<evidence type="ECO:0000255" key="5">
    <source>
        <dbReference type="PROSITE-ProRule" id="PRU01189"/>
    </source>
</evidence>
<evidence type="ECO:0000256" key="6">
    <source>
        <dbReference type="SAM" id="MobiDB-lite"/>
    </source>
</evidence>
<evidence type="ECO:0000305" key="7"/>
<comment type="function">
    <text evidence="1">Transcriptional activator. Seems to be essential for sexual differentiation and formation of the primary steroidogenic tissues. Binds to the Ad4 site found in the promoter region of steroidogenic P450 genes such as CYP11A, CYP11B and CYP21B. Also regulates the AMH/Muellerian inhibiting substance gene as well as the AHCH and STAR genes. 5'-YCAAGGYC-3' and 5'-RRAGGTCA-3' are the consensus sequences for the recognition by NR5A1. The SFPQ-NONO-NR5A1 complex binds to the CYP17 promoter and regulates basal and cAMP-dependent transcriptional activity. Binds phosphatidylcholine and phospholipids with a phosphatidylinositol (PI) headgroup, in particular PI(3,4)P2 and PI(3,4,5)P3. Activated by the phosphorylation of NR5A1 by HIPK3 leading to increased steroidogenic gene expression upon cAMP signaling pathway stimulation (By similarity).</text>
</comment>
<comment type="subunit">
    <text evidence="1">Binds DNA as a monomer (By similarity). Part of a complex consisting of SFPQ, NONO and NR5A1. Interacts with NR0B2, NCOA2 and PPARGC1A. Interacts with DGKQ and CDK7. Binds to and activated by HIPK3 (By similarity).</text>
</comment>
<comment type="subcellular location">
    <subcellularLocation>
        <location>Nucleus</location>
    </subcellularLocation>
</comment>
<comment type="PTM">
    <text evidence="1">Acetylation stimulates the transcriptional activity.</text>
</comment>
<comment type="PTM">
    <text evidence="1">Sumoylation reduces CDK7-mediated phosphorylation on Ser-203.</text>
</comment>
<comment type="PTM">
    <text evidence="1">Phosphorylated on Ser-203 by CDK7. This phosphorylation promotes transcriptional activity (By similarity).</text>
</comment>
<comment type="similarity">
    <text evidence="7">Belongs to the nuclear hormone receptor family. NR5 subfamily.</text>
</comment>
<keyword id="KW-0007">Acetylation</keyword>
<keyword id="KW-0010">Activator</keyword>
<keyword id="KW-0238">DNA-binding</keyword>
<keyword id="KW-1017">Isopeptide bond</keyword>
<keyword id="KW-0446">Lipid-binding</keyword>
<keyword id="KW-0479">Metal-binding</keyword>
<keyword id="KW-0539">Nucleus</keyword>
<keyword id="KW-0597">Phosphoprotein</keyword>
<keyword id="KW-0675">Receptor</keyword>
<keyword id="KW-1185">Reference proteome</keyword>
<keyword id="KW-0804">Transcription</keyword>
<keyword id="KW-0805">Transcription regulation</keyword>
<keyword id="KW-0832">Ubl conjugation</keyword>
<keyword id="KW-0862">Zinc</keyword>
<keyword id="KW-0863">Zinc-finger</keyword>
<reference key="1">
    <citation type="journal article" date="1995" name="J. Biol. Chem.">
        <title>An E box element is required for the expression of the ad4bp gene, a mammalian homologue of ftz-f1 gene, which is essential for adrenal and gonadal development.</title>
        <authorList>
            <person name="Nomura M.M.N."/>
            <person name="Smith J."/>
        </authorList>
    </citation>
    <scope>NUCLEOTIDE SEQUENCE [GENOMIC DNA]</scope>
    <source>
        <strain>Sprague-Dawley</strain>
    </source>
</reference>
<reference key="2">
    <citation type="journal article" date="1993" name="Mol. Endocrinol.">
        <title>Steroidogenic factor 1, an orphan nuclear receptor, regulates the expression of the rat aromatase gene in gonadal tissues.</title>
        <authorList>
            <person name="Lynch J.P."/>
            <person name="Lala D.S."/>
            <person name="Peluso J.J."/>
            <person name="Luo W."/>
            <person name="Parker K.L."/>
            <person name="White B.A."/>
        </authorList>
    </citation>
    <scope>NUCLEOTIDE SEQUENCE [GENOMIC DNA] OF 20-293</scope>
</reference>
<dbReference type="EMBL" id="D42156">
    <property type="protein sequence ID" value="BAA07722.1"/>
    <property type="molecule type" value="Genomic_DNA"/>
</dbReference>
<dbReference type="PIR" id="A56120">
    <property type="entry name" value="A56120"/>
</dbReference>
<dbReference type="RefSeq" id="NP_001178028.1">
    <property type="nucleotide sequence ID" value="NM_001191099.4"/>
</dbReference>
<dbReference type="RefSeq" id="NP_001416431.1">
    <property type="nucleotide sequence ID" value="NM_001429502.1"/>
</dbReference>
<dbReference type="SMR" id="P50569"/>
<dbReference type="FunCoup" id="P50569">
    <property type="interactions" value="510"/>
</dbReference>
<dbReference type="STRING" id="10116.ENSRNOP00000017651"/>
<dbReference type="PhosphoSitePlus" id="P50569"/>
<dbReference type="PaxDb" id="10116-ENSRNOP00000017651"/>
<dbReference type="Ensembl" id="ENSRNOT00000017651.4">
    <property type="protein sequence ID" value="ENSRNOP00000017651.1"/>
    <property type="gene ID" value="ENSRNOG00000012682.7"/>
</dbReference>
<dbReference type="GeneID" id="83826"/>
<dbReference type="KEGG" id="rno:83826"/>
<dbReference type="UCSC" id="RGD:68350">
    <property type="organism name" value="rat"/>
</dbReference>
<dbReference type="AGR" id="RGD:68350"/>
<dbReference type="CTD" id="2516"/>
<dbReference type="RGD" id="68350">
    <property type="gene designation" value="Nr5a1"/>
</dbReference>
<dbReference type="eggNOG" id="KOG4218">
    <property type="taxonomic scope" value="Eukaryota"/>
</dbReference>
<dbReference type="GeneTree" id="ENSGT00940000153391"/>
<dbReference type="HOGENOM" id="CLU_011437_0_0_1"/>
<dbReference type="InParanoid" id="P50569"/>
<dbReference type="OMA" id="YPYPEVY"/>
<dbReference type="OrthoDB" id="5984981at2759"/>
<dbReference type="PhylomeDB" id="P50569"/>
<dbReference type="TreeFam" id="TF350737"/>
<dbReference type="Reactome" id="R-RNO-383280">
    <property type="pathway name" value="Nuclear Receptor transcription pathway"/>
</dbReference>
<dbReference type="Reactome" id="R-RNO-4090294">
    <property type="pathway name" value="SUMOylation of intracellular receptors"/>
</dbReference>
<dbReference type="PRO" id="PR:P50569"/>
<dbReference type="Proteomes" id="UP000002494">
    <property type="component" value="Chromosome 3"/>
</dbReference>
<dbReference type="Bgee" id="ENSRNOG00000012682">
    <property type="expression patterns" value="Expressed in ovary and 4 other cell types or tissues"/>
</dbReference>
<dbReference type="GO" id="GO:0005829">
    <property type="term" value="C:cytosol"/>
    <property type="evidence" value="ECO:0007669"/>
    <property type="project" value="Ensembl"/>
</dbReference>
<dbReference type="GO" id="GO:0005654">
    <property type="term" value="C:nucleoplasm"/>
    <property type="evidence" value="ECO:0007669"/>
    <property type="project" value="Ensembl"/>
</dbReference>
<dbReference type="GO" id="GO:0005634">
    <property type="term" value="C:nucleus"/>
    <property type="evidence" value="ECO:0000266"/>
    <property type="project" value="RGD"/>
</dbReference>
<dbReference type="GO" id="GO:0090575">
    <property type="term" value="C:RNA polymerase II transcription regulator complex"/>
    <property type="evidence" value="ECO:0000266"/>
    <property type="project" value="RGD"/>
</dbReference>
<dbReference type="GO" id="GO:0003682">
    <property type="term" value="F:chromatin binding"/>
    <property type="evidence" value="ECO:0000266"/>
    <property type="project" value="RGD"/>
</dbReference>
<dbReference type="GO" id="GO:0003677">
    <property type="term" value="F:DNA binding"/>
    <property type="evidence" value="ECO:0000266"/>
    <property type="project" value="RGD"/>
</dbReference>
<dbReference type="GO" id="GO:0003700">
    <property type="term" value="F:DNA-binding transcription factor activity"/>
    <property type="evidence" value="ECO:0000315"/>
    <property type="project" value="RGD"/>
</dbReference>
<dbReference type="GO" id="GO:0000981">
    <property type="term" value="F:DNA-binding transcription factor activity, RNA polymerase II-specific"/>
    <property type="evidence" value="ECO:0000266"/>
    <property type="project" value="RGD"/>
</dbReference>
<dbReference type="GO" id="GO:0003690">
    <property type="term" value="F:double-stranded DNA binding"/>
    <property type="evidence" value="ECO:0000314"/>
    <property type="project" value="RGD"/>
</dbReference>
<dbReference type="GO" id="GO:0019899">
    <property type="term" value="F:enzyme binding"/>
    <property type="evidence" value="ECO:0000266"/>
    <property type="project" value="RGD"/>
</dbReference>
<dbReference type="GO" id="GO:0004879">
    <property type="term" value="F:nuclear receptor activity"/>
    <property type="evidence" value="ECO:0000266"/>
    <property type="project" value="RGD"/>
</dbReference>
<dbReference type="GO" id="GO:0005543">
    <property type="term" value="F:phospholipid binding"/>
    <property type="evidence" value="ECO:0000266"/>
    <property type="project" value="RGD"/>
</dbReference>
<dbReference type="GO" id="GO:0000978">
    <property type="term" value="F:RNA polymerase II cis-regulatory region sequence-specific DNA binding"/>
    <property type="evidence" value="ECO:0000266"/>
    <property type="project" value="RGD"/>
</dbReference>
<dbReference type="GO" id="GO:0000977">
    <property type="term" value="F:RNA polymerase II transcription regulatory region sequence-specific DNA binding"/>
    <property type="evidence" value="ECO:0000266"/>
    <property type="project" value="RGD"/>
</dbReference>
<dbReference type="GO" id="GO:0043565">
    <property type="term" value="F:sequence-specific DNA binding"/>
    <property type="evidence" value="ECO:0000314"/>
    <property type="project" value="RGD"/>
</dbReference>
<dbReference type="GO" id="GO:1990837">
    <property type="term" value="F:sequence-specific double-stranded DNA binding"/>
    <property type="evidence" value="ECO:0000266"/>
    <property type="project" value="RGD"/>
</dbReference>
<dbReference type="GO" id="GO:0001221">
    <property type="term" value="F:transcription coregulator binding"/>
    <property type="evidence" value="ECO:0000266"/>
    <property type="project" value="RGD"/>
</dbReference>
<dbReference type="GO" id="GO:0008270">
    <property type="term" value="F:zinc ion binding"/>
    <property type="evidence" value="ECO:0007669"/>
    <property type="project" value="UniProtKB-KW"/>
</dbReference>
<dbReference type="GO" id="GO:0030325">
    <property type="term" value="P:adrenal gland development"/>
    <property type="evidence" value="ECO:0000266"/>
    <property type="project" value="RGD"/>
</dbReference>
<dbReference type="GO" id="GO:0097720">
    <property type="term" value="P:calcineurin-mediated signaling"/>
    <property type="evidence" value="ECO:0000315"/>
    <property type="project" value="RGD"/>
</dbReference>
<dbReference type="GO" id="GO:0008585">
    <property type="term" value="P:female gonad development"/>
    <property type="evidence" value="ECO:0000270"/>
    <property type="project" value="RGD"/>
</dbReference>
<dbReference type="GO" id="GO:0042445">
    <property type="term" value="P:hormone metabolic process"/>
    <property type="evidence" value="ECO:0000266"/>
    <property type="project" value="RGD"/>
</dbReference>
<dbReference type="GO" id="GO:0009755">
    <property type="term" value="P:hormone-mediated signaling pathway"/>
    <property type="evidence" value="ECO:0000314"/>
    <property type="project" value="RGD"/>
</dbReference>
<dbReference type="GO" id="GO:0033327">
    <property type="term" value="P:Leydig cell differentiation"/>
    <property type="evidence" value="ECO:0000266"/>
    <property type="project" value="RGD"/>
</dbReference>
<dbReference type="GO" id="GO:0001553">
    <property type="term" value="P:luteinization"/>
    <property type="evidence" value="ECO:0000266"/>
    <property type="project" value="RGD"/>
</dbReference>
<dbReference type="GO" id="GO:0051457">
    <property type="term" value="P:maintenance of protein location in nucleus"/>
    <property type="evidence" value="ECO:0000266"/>
    <property type="project" value="RGD"/>
</dbReference>
<dbReference type="GO" id="GO:0008584">
    <property type="term" value="P:male gonad development"/>
    <property type="evidence" value="ECO:0000250"/>
    <property type="project" value="UniProtKB"/>
</dbReference>
<dbReference type="GO" id="GO:0030238">
    <property type="term" value="P:male sex determination"/>
    <property type="evidence" value="ECO:0000266"/>
    <property type="project" value="RGD"/>
</dbReference>
<dbReference type="GO" id="GO:2000195">
    <property type="term" value="P:negative regulation of female gonad development"/>
    <property type="evidence" value="ECO:0000266"/>
    <property type="project" value="RGD"/>
</dbReference>
<dbReference type="GO" id="GO:0045893">
    <property type="term" value="P:positive regulation of DNA-templated transcription"/>
    <property type="evidence" value="ECO:0000266"/>
    <property type="project" value="RGD"/>
</dbReference>
<dbReference type="GO" id="GO:0010628">
    <property type="term" value="P:positive regulation of gene expression"/>
    <property type="evidence" value="ECO:0000250"/>
    <property type="project" value="UniProtKB"/>
</dbReference>
<dbReference type="GO" id="GO:2000020">
    <property type="term" value="P:positive regulation of male gonad development"/>
    <property type="evidence" value="ECO:0000315"/>
    <property type="project" value="RGD"/>
</dbReference>
<dbReference type="GO" id="GO:0045944">
    <property type="term" value="P:positive regulation of transcription by RNA polymerase II"/>
    <property type="evidence" value="ECO:0000266"/>
    <property type="project" value="RGD"/>
</dbReference>
<dbReference type="GO" id="GO:0006355">
    <property type="term" value="P:regulation of DNA-templated transcription"/>
    <property type="evidence" value="ECO:0000266"/>
    <property type="project" value="RGD"/>
</dbReference>
<dbReference type="GO" id="GO:0006357">
    <property type="term" value="P:regulation of transcription by RNA polymerase II"/>
    <property type="evidence" value="ECO:0000266"/>
    <property type="project" value="RGD"/>
</dbReference>
<dbReference type="GO" id="GO:0097210">
    <property type="term" value="P:response to gonadotropin-releasing hormone"/>
    <property type="evidence" value="ECO:0000270"/>
    <property type="project" value="RGD"/>
</dbReference>
<dbReference type="GO" id="GO:0060008">
    <property type="term" value="P:Sertoli cell differentiation"/>
    <property type="evidence" value="ECO:0000266"/>
    <property type="project" value="RGD"/>
</dbReference>
<dbReference type="GO" id="GO:0007530">
    <property type="term" value="P:sex determination"/>
    <property type="evidence" value="ECO:0000250"/>
    <property type="project" value="UniProtKB"/>
</dbReference>
<dbReference type="GO" id="GO:0009888">
    <property type="term" value="P:tissue development"/>
    <property type="evidence" value="ECO:0000266"/>
    <property type="project" value="RGD"/>
</dbReference>
<dbReference type="GO" id="GO:0006366">
    <property type="term" value="P:transcription by RNA polymerase II"/>
    <property type="evidence" value="ECO:0000315"/>
    <property type="project" value="RGD"/>
</dbReference>
<dbReference type="CDD" id="cd07167">
    <property type="entry name" value="NR_DBD_Lrh-1_like"/>
    <property type="match status" value="1"/>
</dbReference>
<dbReference type="CDD" id="cd07070">
    <property type="entry name" value="NR_LBD_SF-1"/>
    <property type="match status" value="1"/>
</dbReference>
<dbReference type="FunFam" id="3.30.50.10:FF:000006">
    <property type="entry name" value="Nuclear receptor subfamily 5 group A member"/>
    <property type="match status" value="1"/>
</dbReference>
<dbReference type="FunFam" id="1.10.565.10:FF:000011">
    <property type="entry name" value="Nuclear receptor subfamily 5, group A, member 2"/>
    <property type="match status" value="1"/>
</dbReference>
<dbReference type="Gene3D" id="3.30.50.10">
    <property type="entry name" value="Erythroid Transcription Factor GATA-1, subunit A"/>
    <property type="match status" value="1"/>
</dbReference>
<dbReference type="Gene3D" id="1.10.565.10">
    <property type="entry name" value="Retinoid X Receptor"/>
    <property type="match status" value="1"/>
</dbReference>
<dbReference type="InterPro" id="IPR035500">
    <property type="entry name" value="NHR-like_dom_sf"/>
</dbReference>
<dbReference type="InterPro" id="IPR016355">
    <property type="entry name" value="NR5-like"/>
</dbReference>
<dbReference type="InterPro" id="IPR000536">
    <property type="entry name" value="Nucl_hrmn_rcpt_lig-bd"/>
</dbReference>
<dbReference type="InterPro" id="IPR001723">
    <property type="entry name" value="Nuclear_hrmn_rcpt"/>
</dbReference>
<dbReference type="InterPro" id="IPR001628">
    <property type="entry name" value="Znf_hrmn_rcpt"/>
</dbReference>
<dbReference type="InterPro" id="IPR013088">
    <property type="entry name" value="Znf_NHR/GATA"/>
</dbReference>
<dbReference type="PANTHER" id="PTHR24086">
    <property type="entry name" value="NUCLEAR RECEPTOR SUBFAMILY 5 GROUP A"/>
    <property type="match status" value="1"/>
</dbReference>
<dbReference type="PANTHER" id="PTHR24086:SF24">
    <property type="entry name" value="STEROIDOGENIC FACTOR 1"/>
    <property type="match status" value="1"/>
</dbReference>
<dbReference type="Pfam" id="PF00104">
    <property type="entry name" value="Hormone_recep"/>
    <property type="match status" value="1"/>
</dbReference>
<dbReference type="Pfam" id="PF00105">
    <property type="entry name" value="zf-C4"/>
    <property type="match status" value="1"/>
</dbReference>
<dbReference type="PIRSF" id="PIRSF002530">
    <property type="entry name" value="Nuc_orph_FTZ-F1"/>
    <property type="match status" value="1"/>
</dbReference>
<dbReference type="PRINTS" id="PR00398">
    <property type="entry name" value="STRDHORMONER"/>
</dbReference>
<dbReference type="PRINTS" id="PR00047">
    <property type="entry name" value="STROIDFINGER"/>
</dbReference>
<dbReference type="SMART" id="SM00430">
    <property type="entry name" value="HOLI"/>
    <property type="match status" value="1"/>
</dbReference>
<dbReference type="SMART" id="SM00399">
    <property type="entry name" value="ZnF_C4"/>
    <property type="match status" value="1"/>
</dbReference>
<dbReference type="SUPFAM" id="SSF57716">
    <property type="entry name" value="Glucocorticoid receptor-like (DNA-binding domain)"/>
    <property type="match status" value="1"/>
</dbReference>
<dbReference type="SUPFAM" id="SSF48508">
    <property type="entry name" value="Nuclear receptor ligand-binding domain"/>
    <property type="match status" value="1"/>
</dbReference>
<dbReference type="PROSITE" id="PS51843">
    <property type="entry name" value="NR_LBD"/>
    <property type="match status" value="1"/>
</dbReference>
<dbReference type="PROSITE" id="PS00031">
    <property type="entry name" value="NUCLEAR_REC_DBD_1"/>
    <property type="match status" value="1"/>
</dbReference>
<dbReference type="PROSITE" id="PS51030">
    <property type="entry name" value="NUCLEAR_REC_DBD_2"/>
    <property type="match status" value="1"/>
</dbReference>
<protein>
    <recommendedName>
        <fullName>Steroidogenic factor 1</fullName>
        <shortName>SF-1</shortName>
        <shortName>STF-1</shortName>
    </recommendedName>
    <alternativeName>
        <fullName>Adrenal 4-binding protein</fullName>
    </alternativeName>
    <alternativeName>
        <fullName>Fushi tarazu factor homolog 1</fullName>
    </alternativeName>
    <alternativeName>
        <fullName>Nuclear receptor subfamily 5 group A member 1</fullName>
    </alternativeName>
    <alternativeName>
        <fullName>Steroid hormone receptor Ad4BP</fullName>
    </alternativeName>
</protein>
<sequence length="462" mass="52087">MDYSYDEDLDELCPVCGDKVSGYHYGLLTCESCKGFFKRTVQNNKHYTCTESQSCKIDKTQRKRCPFCRFQKCLTVGMRLEAVRADRMRGGRNKFGPMYKRDRALKQQKKAQIRANGFKLETGPPMGVPPPPPPPPDYMLPPSLHAPEPKALVSGPPSGPLGDFGAPSLPMAVPGPHGPLAGYLYPAFSNRTIKSEYPEPYASPPQQPGPPYSYPEPFSGGPNVPELILQLLQLEPEEDQVRARIVGCLQEPAKSRPDQPAPFSLLCRMADQTFISIVDWARRCMVFKELEVADQMTLLQNCWSELLVLDHIYRQVQYGKEDSILLVTGQEVELSTVAVQAGSLLHSLVLRAQELVLQLHALQLDRQEFVCLKFLILFSLDVKFLNNHSLVKDAQEKANAALLDYTLCHYPHCGDKFQQLLLCLVEVRALSMQAKEYLYHKHLGNEMPRNNLLIEMLQAKQT</sequence>
<accession>P50569</accession>
<proteinExistence type="inferred from homology"/>
<name>STF1_RAT</name>